<dbReference type="EMBL" id="AM040264">
    <property type="protein sequence ID" value="CAJ12124.1"/>
    <property type="molecule type" value="Genomic_DNA"/>
</dbReference>
<dbReference type="RefSeq" id="WP_002965230.1">
    <property type="nucleotide sequence ID" value="NZ_KN046823.1"/>
</dbReference>
<dbReference type="SMR" id="P0C0Z6"/>
<dbReference type="STRING" id="359391.BAB1_2168"/>
<dbReference type="GeneID" id="97534579"/>
<dbReference type="KEGG" id="bmf:BAB1_2168"/>
<dbReference type="PATRIC" id="fig|359391.11.peg.1405"/>
<dbReference type="HOGENOM" id="CLU_148518_0_0_5"/>
<dbReference type="Proteomes" id="UP000002719">
    <property type="component" value="Chromosome I"/>
</dbReference>
<dbReference type="GO" id="GO:0022627">
    <property type="term" value="C:cytosolic small ribosomal subunit"/>
    <property type="evidence" value="ECO:0007669"/>
    <property type="project" value="TreeGrafter"/>
</dbReference>
<dbReference type="GO" id="GO:0019843">
    <property type="term" value="F:rRNA binding"/>
    <property type="evidence" value="ECO:0007669"/>
    <property type="project" value="UniProtKB-UniRule"/>
</dbReference>
<dbReference type="GO" id="GO:0003735">
    <property type="term" value="F:structural constituent of ribosome"/>
    <property type="evidence" value="ECO:0007669"/>
    <property type="project" value="InterPro"/>
</dbReference>
<dbReference type="GO" id="GO:0006412">
    <property type="term" value="P:translation"/>
    <property type="evidence" value="ECO:0007669"/>
    <property type="project" value="UniProtKB-UniRule"/>
</dbReference>
<dbReference type="CDD" id="cd00353">
    <property type="entry name" value="Ribosomal_S15p_S13e"/>
    <property type="match status" value="1"/>
</dbReference>
<dbReference type="FunFam" id="1.10.287.10:FF:000002">
    <property type="entry name" value="30S ribosomal protein S15"/>
    <property type="match status" value="1"/>
</dbReference>
<dbReference type="Gene3D" id="6.10.250.3130">
    <property type="match status" value="1"/>
</dbReference>
<dbReference type="Gene3D" id="1.10.287.10">
    <property type="entry name" value="S15/NS1, RNA-binding"/>
    <property type="match status" value="1"/>
</dbReference>
<dbReference type="HAMAP" id="MF_01343_B">
    <property type="entry name" value="Ribosomal_uS15_B"/>
    <property type="match status" value="1"/>
</dbReference>
<dbReference type="InterPro" id="IPR000589">
    <property type="entry name" value="Ribosomal_uS15"/>
</dbReference>
<dbReference type="InterPro" id="IPR005290">
    <property type="entry name" value="Ribosomal_uS15_bac-type"/>
</dbReference>
<dbReference type="InterPro" id="IPR009068">
    <property type="entry name" value="uS15_NS1_RNA-bd_sf"/>
</dbReference>
<dbReference type="NCBIfam" id="TIGR00952">
    <property type="entry name" value="S15_bact"/>
    <property type="match status" value="1"/>
</dbReference>
<dbReference type="PANTHER" id="PTHR23321">
    <property type="entry name" value="RIBOSOMAL PROTEIN S15, BACTERIAL AND ORGANELLAR"/>
    <property type="match status" value="1"/>
</dbReference>
<dbReference type="PANTHER" id="PTHR23321:SF26">
    <property type="entry name" value="SMALL RIBOSOMAL SUBUNIT PROTEIN US15M"/>
    <property type="match status" value="1"/>
</dbReference>
<dbReference type="Pfam" id="PF00312">
    <property type="entry name" value="Ribosomal_S15"/>
    <property type="match status" value="1"/>
</dbReference>
<dbReference type="SMART" id="SM01387">
    <property type="entry name" value="Ribosomal_S15"/>
    <property type="match status" value="1"/>
</dbReference>
<dbReference type="SUPFAM" id="SSF47060">
    <property type="entry name" value="S15/NS1 RNA-binding domain"/>
    <property type="match status" value="1"/>
</dbReference>
<dbReference type="PROSITE" id="PS00362">
    <property type="entry name" value="RIBOSOMAL_S15"/>
    <property type="match status" value="1"/>
</dbReference>
<comment type="function">
    <text evidence="1">One of the primary rRNA binding proteins, it binds directly to 16S rRNA where it helps nucleate assembly of the platform of the 30S subunit by binding and bridging several RNA helices of the 16S rRNA.</text>
</comment>
<comment type="function">
    <text evidence="1">Forms an intersubunit bridge (bridge B4) with the 23S rRNA of the 50S subunit in the ribosome.</text>
</comment>
<comment type="subunit">
    <text evidence="1">Part of the 30S ribosomal subunit. Forms a bridge to the 50S subunit in the 70S ribosome, contacting the 23S rRNA.</text>
</comment>
<comment type="similarity">
    <text evidence="1">Belongs to the universal ribosomal protein uS15 family.</text>
</comment>
<reference key="1">
    <citation type="journal article" date="2005" name="Infect. Immun.">
        <title>Whole-genome analyses of speciation events in pathogenic Brucellae.</title>
        <authorList>
            <person name="Chain P.S."/>
            <person name="Comerci D.J."/>
            <person name="Tolmasky M.E."/>
            <person name="Larimer F.W."/>
            <person name="Malfatti S.A."/>
            <person name="Vergez L.M."/>
            <person name="Aguero F."/>
            <person name="Land M.L."/>
            <person name="Ugalde R.A."/>
            <person name="Garcia E."/>
        </authorList>
    </citation>
    <scope>NUCLEOTIDE SEQUENCE [LARGE SCALE GENOMIC DNA]</scope>
    <source>
        <strain>2308</strain>
    </source>
</reference>
<feature type="chain" id="PRO_0000115399" description="Small ribosomal subunit protein uS15">
    <location>
        <begin position="1"/>
        <end position="89"/>
    </location>
</feature>
<keyword id="KW-1185">Reference proteome</keyword>
<keyword id="KW-0687">Ribonucleoprotein</keyword>
<keyword id="KW-0689">Ribosomal protein</keyword>
<keyword id="KW-0694">RNA-binding</keyword>
<keyword id="KW-0699">rRNA-binding</keyword>
<accession>P0C0Z6</accession>
<accession>Q57A97</accession>
<protein>
    <recommendedName>
        <fullName evidence="1">Small ribosomal subunit protein uS15</fullName>
    </recommendedName>
    <alternativeName>
        <fullName evidence="2">30S ribosomal protein S15</fullName>
    </alternativeName>
</protein>
<evidence type="ECO:0000255" key="1">
    <source>
        <dbReference type="HAMAP-Rule" id="MF_01343"/>
    </source>
</evidence>
<evidence type="ECO:0000305" key="2"/>
<name>RS15_BRUA2</name>
<proteinExistence type="inferred from homology"/>
<organism>
    <name type="scientific">Brucella abortus (strain 2308)</name>
    <dbReference type="NCBI Taxonomy" id="359391"/>
    <lineage>
        <taxon>Bacteria</taxon>
        <taxon>Pseudomonadati</taxon>
        <taxon>Pseudomonadota</taxon>
        <taxon>Alphaproteobacteria</taxon>
        <taxon>Hyphomicrobiales</taxon>
        <taxon>Brucellaceae</taxon>
        <taxon>Brucella/Ochrobactrum group</taxon>
        <taxon>Brucella</taxon>
    </lineage>
</organism>
<sequence length="89" mass="10210">MSITAERKQALIKEYATKEGDTGSPEVQVAVLSERIANLTEHFKGHKNDNHSRRGLLKLVSQRRRLLDYVKGVDHARYQALITRLGLRR</sequence>
<gene>
    <name evidence="1" type="primary">rpsO</name>
    <name type="ordered locus">BAB1_2168</name>
</gene>